<protein>
    <recommendedName>
        <fullName>CTP synthase</fullName>
        <ecNumber>6.3.4.2</ecNumber>
    </recommendedName>
    <alternativeName>
        <fullName>CTP synthetase</fullName>
    </alternativeName>
    <alternativeName>
        <fullName>UTP--ammonia ligase</fullName>
    </alternativeName>
</protein>
<reference key="1">
    <citation type="journal article" date="2002" name="Nature">
        <title>The genome sequence of Schizosaccharomyces pombe.</title>
        <authorList>
            <person name="Wood V."/>
            <person name="Gwilliam R."/>
            <person name="Rajandream M.A."/>
            <person name="Lyne M.H."/>
            <person name="Lyne R."/>
            <person name="Stewart A."/>
            <person name="Sgouros J.G."/>
            <person name="Peat N."/>
            <person name="Hayles J."/>
            <person name="Baker S.G."/>
            <person name="Basham D."/>
            <person name="Bowman S."/>
            <person name="Brooks K."/>
            <person name="Brown D."/>
            <person name="Brown S."/>
            <person name="Chillingworth T."/>
            <person name="Churcher C.M."/>
            <person name="Collins M."/>
            <person name="Connor R."/>
            <person name="Cronin A."/>
            <person name="Davis P."/>
            <person name="Feltwell T."/>
            <person name="Fraser A."/>
            <person name="Gentles S."/>
            <person name="Goble A."/>
            <person name="Hamlin N."/>
            <person name="Harris D.E."/>
            <person name="Hidalgo J."/>
            <person name="Hodgson G."/>
            <person name="Holroyd S."/>
            <person name="Hornsby T."/>
            <person name="Howarth S."/>
            <person name="Huckle E.J."/>
            <person name="Hunt S."/>
            <person name="Jagels K."/>
            <person name="James K.D."/>
            <person name="Jones L."/>
            <person name="Jones M."/>
            <person name="Leather S."/>
            <person name="McDonald S."/>
            <person name="McLean J."/>
            <person name="Mooney P."/>
            <person name="Moule S."/>
            <person name="Mungall K.L."/>
            <person name="Murphy L.D."/>
            <person name="Niblett D."/>
            <person name="Odell C."/>
            <person name="Oliver K."/>
            <person name="O'Neil S."/>
            <person name="Pearson D."/>
            <person name="Quail M.A."/>
            <person name="Rabbinowitsch E."/>
            <person name="Rutherford K.M."/>
            <person name="Rutter S."/>
            <person name="Saunders D."/>
            <person name="Seeger K."/>
            <person name="Sharp S."/>
            <person name="Skelton J."/>
            <person name="Simmonds M.N."/>
            <person name="Squares R."/>
            <person name="Squares S."/>
            <person name="Stevens K."/>
            <person name="Taylor K."/>
            <person name="Taylor R.G."/>
            <person name="Tivey A."/>
            <person name="Walsh S.V."/>
            <person name="Warren T."/>
            <person name="Whitehead S."/>
            <person name="Woodward J.R."/>
            <person name="Volckaert G."/>
            <person name="Aert R."/>
            <person name="Robben J."/>
            <person name="Grymonprez B."/>
            <person name="Weltjens I."/>
            <person name="Vanstreels E."/>
            <person name="Rieger M."/>
            <person name="Schaefer M."/>
            <person name="Mueller-Auer S."/>
            <person name="Gabel C."/>
            <person name="Fuchs M."/>
            <person name="Duesterhoeft A."/>
            <person name="Fritzc C."/>
            <person name="Holzer E."/>
            <person name="Moestl D."/>
            <person name="Hilbert H."/>
            <person name="Borzym K."/>
            <person name="Langer I."/>
            <person name="Beck A."/>
            <person name="Lehrach H."/>
            <person name="Reinhardt R."/>
            <person name="Pohl T.M."/>
            <person name="Eger P."/>
            <person name="Zimmermann W."/>
            <person name="Wedler H."/>
            <person name="Wambutt R."/>
            <person name="Purnelle B."/>
            <person name="Goffeau A."/>
            <person name="Cadieu E."/>
            <person name="Dreano S."/>
            <person name="Gloux S."/>
            <person name="Lelaure V."/>
            <person name="Mottier S."/>
            <person name="Galibert F."/>
            <person name="Aves S.J."/>
            <person name="Xiang Z."/>
            <person name="Hunt C."/>
            <person name="Moore K."/>
            <person name="Hurst S.M."/>
            <person name="Lucas M."/>
            <person name="Rochet M."/>
            <person name="Gaillardin C."/>
            <person name="Tallada V.A."/>
            <person name="Garzon A."/>
            <person name="Thode G."/>
            <person name="Daga R.R."/>
            <person name="Cruzado L."/>
            <person name="Jimenez J."/>
            <person name="Sanchez M."/>
            <person name="del Rey F."/>
            <person name="Benito J."/>
            <person name="Dominguez A."/>
            <person name="Revuelta J.L."/>
            <person name="Moreno S."/>
            <person name="Armstrong J."/>
            <person name="Forsburg S.L."/>
            <person name="Cerutti L."/>
            <person name="Lowe T."/>
            <person name="McCombie W.R."/>
            <person name="Paulsen I."/>
            <person name="Potashkin J."/>
            <person name="Shpakovski G.V."/>
            <person name="Ussery D."/>
            <person name="Barrell B.G."/>
            <person name="Nurse P."/>
        </authorList>
    </citation>
    <scope>NUCLEOTIDE SEQUENCE [LARGE SCALE GENOMIC DNA]</scope>
    <source>
        <strain>972 / ATCC 24843</strain>
    </source>
</reference>
<gene>
    <name type="primary">ura7</name>
    <name type="ORF">SPAC10F6.03c</name>
</gene>
<name>PYRG_SCHPO</name>
<comment type="function">
    <text>Catalyzes the ATP-dependent amination of UTP to CTP with either L-glutamine or ammonia as the source of nitrogen.</text>
</comment>
<comment type="catalytic activity">
    <reaction>
        <text>UTP + L-glutamine + ATP + H2O = CTP + L-glutamate + ADP + phosphate + 2 H(+)</text>
        <dbReference type="Rhea" id="RHEA:26426"/>
        <dbReference type="ChEBI" id="CHEBI:15377"/>
        <dbReference type="ChEBI" id="CHEBI:15378"/>
        <dbReference type="ChEBI" id="CHEBI:29985"/>
        <dbReference type="ChEBI" id="CHEBI:30616"/>
        <dbReference type="ChEBI" id="CHEBI:37563"/>
        <dbReference type="ChEBI" id="CHEBI:43474"/>
        <dbReference type="ChEBI" id="CHEBI:46398"/>
        <dbReference type="ChEBI" id="CHEBI:58359"/>
        <dbReference type="ChEBI" id="CHEBI:456216"/>
        <dbReference type="EC" id="6.3.4.2"/>
    </reaction>
</comment>
<comment type="pathway">
    <text>Pyrimidine metabolism; CTP biosynthesis via de novo pathway; CTP from UDP: step 2/2.</text>
</comment>
<comment type="similarity">
    <text evidence="2">Belongs to the CTP synthase family.</text>
</comment>
<accession>O42644</accession>
<organism>
    <name type="scientific">Schizosaccharomyces pombe (strain 972 / ATCC 24843)</name>
    <name type="common">Fission yeast</name>
    <dbReference type="NCBI Taxonomy" id="284812"/>
    <lineage>
        <taxon>Eukaryota</taxon>
        <taxon>Fungi</taxon>
        <taxon>Dikarya</taxon>
        <taxon>Ascomycota</taxon>
        <taxon>Taphrinomycotina</taxon>
        <taxon>Schizosaccharomycetes</taxon>
        <taxon>Schizosaccharomycetales</taxon>
        <taxon>Schizosaccharomycetaceae</taxon>
        <taxon>Schizosaccharomyces</taxon>
    </lineage>
</organism>
<proteinExistence type="inferred from homology"/>
<evidence type="ECO:0000255" key="1">
    <source>
        <dbReference type="PROSITE-ProRule" id="PRU00605"/>
    </source>
</evidence>
<evidence type="ECO:0000305" key="2"/>
<dbReference type="EC" id="6.3.4.2"/>
<dbReference type="EMBL" id="CU329670">
    <property type="protein sequence ID" value="CAA15716.1"/>
    <property type="molecule type" value="Genomic_DNA"/>
</dbReference>
<dbReference type="PIR" id="T37497">
    <property type="entry name" value="T37497"/>
</dbReference>
<dbReference type="SMR" id="O42644"/>
<dbReference type="BioGRID" id="279378">
    <property type="interactions" value="6"/>
</dbReference>
<dbReference type="FunCoup" id="O42644">
    <property type="interactions" value="328"/>
</dbReference>
<dbReference type="STRING" id="284812.O42644"/>
<dbReference type="iPTMnet" id="O42644"/>
<dbReference type="PaxDb" id="4896-SPAC10F6.03c.1"/>
<dbReference type="EnsemblFungi" id="SPAC10F6.03c.1">
    <property type="protein sequence ID" value="SPAC10F6.03c.1:pep"/>
    <property type="gene ID" value="SPAC10F6.03c"/>
</dbReference>
<dbReference type="KEGG" id="spo:2542937"/>
<dbReference type="PomBase" id="SPAC10F6.03c"/>
<dbReference type="VEuPathDB" id="FungiDB:SPAC10F6.03c"/>
<dbReference type="eggNOG" id="KOG2387">
    <property type="taxonomic scope" value="Eukaryota"/>
</dbReference>
<dbReference type="HOGENOM" id="CLU_011675_5_0_1"/>
<dbReference type="InParanoid" id="O42644"/>
<dbReference type="OMA" id="EFNNAYR"/>
<dbReference type="PhylomeDB" id="O42644"/>
<dbReference type="Reactome" id="R-SPO-499943">
    <property type="pathway name" value="Interconversion of nucleotide di- and triphosphates"/>
</dbReference>
<dbReference type="UniPathway" id="UPA00159">
    <property type="reaction ID" value="UER00277"/>
</dbReference>
<dbReference type="PRO" id="PR:O42644"/>
<dbReference type="Proteomes" id="UP000002485">
    <property type="component" value="Chromosome I"/>
</dbReference>
<dbReference type="GO" id="GO:0097268">
    <property type="term" value="C:cytoophidium"/>
    <property type="evidence" value="ECO:0000314"/>
    <property type="project" value="PomBase"/>
</dbReference>
<dbReference type="GO" id="GO:0005737">
    <property type="term" value="C:cytoplasm"/>
    <property type="evidence" value="ECO:0007005"/>
    <property type="project" value="PomBase"/>
</dbReference>
<dbReference type="GO" id="GO:0005829">
    <property type="term" value="C:cytosol"/>
    <property type="evidence" value="ECO:0000266"/>
    <property type="project" value="PomBase"/>
</dbReference>
<dbReference type="GO" id="GO:0005524">
    <property type="term" value="F:ATP binding"/>
    <property type="evidence" value="ECO:0007669"/>
    <property type="project" value="UniProtKB-KW"/>
</dbReference>
<dbReference type="GO" id="GO:0003883">
    <property type="term" value="F:CTP synthase activity"/>
    <property type="evidence" value="ECO:0000318"/>
    <property type="project" value="GO_Central"/>
</dbReference>
<dbReference type="GO" id="GO:0042802">
    <property type="term" value="F:identical protein binding"/>
    <property type="evidence" value="ECO:0000318"/>
    <property type="project" value="GO_Central"/>
</dbReference>
<dbReference type="GO" id="GO:0044210">
    <property type="term" value="P:'de novo' CTP biosynthetic process"/>
    <property type="evidence" value="ECO:0007669"/>
    <property type="project" value="UniProtKB-UniPathway"/>
</dbReference>
<dbReference type="GO" id="GO:0006207">
    <property type="term" value="P:'de novo' pyrimidine nucleobase biosynthetic process"/>
    <property type="evidence" value="ECO:0000266"/>
    <property type="project" value="PomBase"/>
</dbReference>
<dbReference type="GO" id="GO:0006241">
    <property type="term" value="P:CTP biosynthetic process"/>
    <property type="evidence" value="ECO:0000318"/>
    <property type="project" value="GO_Central"/>
</dbReference>
<dbReference type="GO" id="GO:0019856">
    <property type="term" value="P:pyrimidine nucleobase biosynthetic process"/>
    <property type="evidence" value="ECO:0000318"/>
    <property type="project" value="GO_Central"/>
</dbReference>
<dbReference type="CDD" id="cd03113">
    <property type="entry name" value="CTPS_N"/>
    <property type="match status" value="1"/>
</dbReference>
<dbReference type="CDD" id="cd01746">
    <property type="entry name" value="GATase1_CTP_Synthase"/>
    <property type="match status" value="1"/>
</dbReference>
<dbReference type="FunFam" id="3.40.50.300:FF:000207">
    <property type="entry name" value="CTP synthase"/>
    <property type="match status" value="1"/>
</dbReference>
<dbReference type="FunFam" id="3.40.50.880:FF:000005">
    <property type="entry name" value="CTP synthase"/>
    <property type="match status" value="1"/>
</dbReference>
<dbReference type="Gene3D" id="3.40.50.880">
    <property type="match status" value="1"/>
</dbReference>
<dbReference type="Gene3D" id="3.40.50.300">
    <property type="entry name" value="P-loop containing nucleotide triphosphate hydrolases"/>
    <property type="match status" value="1"/>
</dbReference>
<dbReference type="InterPro" id="IPR029062">
    <property type="entry name" value="Class_I_gatase-like"/>
</dbReference>
<dbReference type="InterPro" id="IPR004468">
    <property type="entry name" value="CTP_synthase"/>
</dbReference>
<dbReference type="InterPro" id="IPR017456">
    <property type="entry name" value="CTP_synthase_N"/>
</dbReference>
<dbReference type="InterPro" id="IPR017926">
    <property type="entry name" value="GATASE"/>
</dbReference>
<dbReference type="InterPro" id="IPR033828">
    <property type="entry name" value="GATase1_CTP_Synthase"/>
</dbReference>
<dbReference type="InterPro" id="IPR027417">
    <property type="entry name" value="P-loop_NTPase"/>
</dbReference>
<dbReference type="NCBIfam" id="NF003792">
    <property type="entry name" value="PRK05380.1"/>
    <property type="match status" value="1"/>
</dbReference>
<dbReference type="NCBIfam" id="TIGR00337">
    <property type="entry name" value="PyrG"/>
    <property type="match status" value="1"/>
</dbReference>
<dbReference type="PANTHER" id="PTHR11550">
    <property type="entry name" value="CTP SYNTHASE"/>
    <property type="match status" value="1"/>
</dbReference>
<dbReference type="PANTHER" id="PTHR11550:SF0">
    <property type="entry name" value="CTP SYNTHASE-RELATED"/>
    <property type="match status" value="1"/>
</dbReference>
<dbReference type="Pfam" id="PF06418">
    <property type="entry name" value="CTP_synth_N"/>
    <property type="match status" value="1"/>
</dbReference>
<dbReference type="Pfam" id="PF00117">
    <property type="entry name" value="GATase"/>
    <property type="match status" value="1"/>
</dbReference>
<dbReference type="SUPFAM" id="SSF52317">
    <property type="entry name" value="Class I glutamine amidotransferase-like"/>
    <property type="match status" value="1"/>
</dbReference>
<dbReference type="SUPFAM" id="SSF52540">
    <property type="entry name" value="P-loop containing nucleoside triphosphate hydrolases"/>
    <property type="match status" value="1"/>
</dbReference>
<dbReference type="PROSITE" id="PS51273">
    <property type="entry name" value="GATASE_TYPE_1"/>
    <property type="match status" value="1"/>
</dbReference>
<keyword id="KW-0067">ATP-binding</keyword>
<keyword id="KW-0315">Glutamine amidotransferase</keyword>
<keyword id="KW-0436">Ligase</keyword>
<keyword id="KW-0547">Nucleotide-binding</keyword>
<keyword id="KW-0665">Pyrimidine biosynthesis</keyword>
<keyword id="KW-1185">Reference proteome</keyword>
<feature type="chain" id="PRO_0000138282" description="CTP synthase">
    <location>
        <begin position="1"/>
        <end position="600"/>
    </location>
</feature>
<feature type="domain" description="Glutamine amidotransferase type-1" evidence="1">
    <location>
        <begin position="304"/>
        <end position="570"/>
    </location>
</feature>
<feature type="active site" description="For GATase activity" evidence="1">
    <location>
        <position position="403"/>
    </location>
</feature>
<feature type="active site" description="For GATase activity" evidence="1">
    <location>
        <position position="532"/>
    </location>
</feature>
<feature type="active site" description="For GATase activity" evidence="1">
    <location>
        <position position="534"/>
    </location>
</feature>
<sequence length="600" mass="66867">MKYVLVSGGVISGIGKGVIASSTGLLLKTLGLKVTSIKIDPYMNIDAGTMSPLEHGEVFVLNDGGEVDLDLGNYERYLNVTLTHDNNITTGKVYSNVIQKERRGDYLGKTVQIVPHVTNEIQDWVERVARIPVDQSGEEPDVCIVELGGTVGDIESAAFVEAMRQFQFRVGHENFVSIHVSLVPVINGEQKTKPTQQAIRDLRSLGITPDLIACRCKQPLEKSVIDKISLFCHVGPEQVLAVHDVSSTYHVPQLLEDKLLEYLKIRFALDKISVSRELALAGENMWSSWKHLTQGYDHLFKKVTIVLVGKYTHLQDSYISVIKALEHSAMRCGRKLDLQWVEASHLEASTNTSDPLSYHKAWHLVCSANGILVPGGFGSRGVEGMIAAAKWARENNTPYLGICLGMQVAVIEFARSVCGIEGAFSEEFDKECENNVVVYMPEIDKDKLGGTMRLGLRPTFFQPNSEWSKLRKLHKMVDEVLERHRHRYEINPAFVSRLEQGGISFIGKDERGERMEIIEKRDHPYFVGVQYHPEYLSKPLKPSPPIFGLVAASAGLLDEFIQSGEEVEWSNFSHFNAESALADMNDSVEVTEEATVVTIS</sequence>